<protein>
    <recommendedName>
        <fullName>T-cell surface glycoprotein CD4</fullName>
    </recommendedName>
    <alternativeName>
        <fullName>T-cell surface antigen T4/Leu-3</fullName>
    </alternativeName>
    <cdAntigenName>CD4</cdAntigenName>
</protein>
<comment type="function">
    <text evidence="2">Integral membrane glycoprotein that plays an essential role in the immune response and serves multiple functions in responses against both external and internal offenses. In T-cells, functions primarily as a coreceptor for MHC class II molecule:peptide complex. The antigens presented by class II peptides are derived from extracellular proteins while class I peptides are derived from cytosolic proteins. Interacts simultaneously with the T-cell receptor (TCR) and the MHC class II presented by antigen presenting cells (APCs). In turn, recruits the Src kinase LCK to the vicinity of the TCR-CD3 complex. LCK then initiates different intracellular signaling pathways by phosphorylating various substrates ultimately leading to lymphokine production, motility, adhesion and activation of T-helper cells. In other cells such as macrophages or NK cells, plays a role in differentiation/activation, cytokine expression and cell migration in a TCR/LCK-independent pathway. Participates in the development of T-helper cells in the thymus and triggers the differentiation of monocytes into functional mature macrophages.</text>
</comment>
<comment type="subunit">
    <text evidence="2">Forms disulfide-linked homodimers at the cell surface. Interacts with LCK. Interacts with PTK2/FAK1. Binds to P4HB/PDI. Interacts with IL16; this interaction induces a CD4-dependent signaling in lymphocytes. Interacts (via Ig-like V-type domain) with MHCII alpha chain (via alpha-2 domain) and beta chain (via beta-2 domain); this interaction increases the affinity of TCR for peptide-MHCII. CD4 oligomerization via Ig-like C2-type 2 and 3 domains appears to be required for stable binding to MHCII and adhesion between T cells and APCs.</text>
</comment>
<comment type="subcellular location">
    <subcellularLocation>
        <location evidence="2">Cell membrane</location>
        <topology evidence="2">Single-pass type I membrane protein</topology>
    </subcellularLocation>
    <text evidence="2">Localizes to lipid rafts.</text>
</comment>
<comment type="domain">
    <text evidence="2">The Ig-like V-type domain mediates the interaction with MHCII.</text>
</comment>
<comment type="PTM">
    <text evidence="2">Palmitoylation and association with LCK contribute to the enrichment of CD4 in lipid rafts.</text>
</comment>
<comment type="PTM">
    <text evidence="2">Phosphorylated by PKC; phosphorylation plays an important role for CD4 internalization.</text>
</comment>
<keyword id="KW-1064">Adaptive immunity</keyword>
<keyword id="KW-1003">Cell membrane</keyword>
<keyword id="KW-1015">Disulfide bond</keyword>
<keyword id="KW-0325">Glycoprotein</keyword>
<keyword id="KW-0391">Immunity</keyword>
<keyword id="KW-0393">Immunoglobulin domain</keyword>
<keyword id="KW-0449">Lipoprotein</keyword>
<keyword id="KW-0472">Membrane</keyword>
<keyword id="KW-0564">Palmitate</keyword>
<keyword id="KW-0597">Phosphoprotein</keyword>
<keyword id="KW-1185">Reference proteome</keyword>
<keyword id="KW-0677">Repeat</keyword>
<keyword id="KW-0732">Signal</keyword>
<keyword id="KW-0812">Transmembrane</keyword>
<keyword id="KW-1133">Transmembrane helix</keyword>
<sequence length="455" mass="50499">MDPRTSLRHLFLVLQLVMLPAGTQGKKVVLGKAGELAELPCKASQNKSLFFSWKNSYQTKILGRHGYFWHKGASNLHSRVESKINLWDQGSFPLVIKDLEVPDSGTYICEVEDKKIEVELQVFRLTASSDTRLLLGQSLTLTLEGPSGSNPSVQWKGPGNKRKNEAKSLSLPQVGLQDSGTWTCTVSQAQQTLVFNKHILVLAFQEVSSTVYAKEGEQMNFSFPLTFGDENLSGELSWLQAKGNSSPESWITFKLNNGKVTVGKARKDLKLRMSKALPLHLTLPQALPQYAGSGNLTLNLTKGKLYQEVNLVVMRVTKSPNSLTCEVLGPTSPRLILSLKKENQSMRVSDQQKLVTVLGPEAGMWQCLLSDKGKVLLESKVKILPPVLAHAWPKLLAVVLGGITSLLLLAGFCIFSAKCWHRRRRAERTSQIKRLLSEKKTCHCSHRLQKTCSLT</sequence>
<evidence type="ECO:0000250" key="1"/>
<evidence type="ECO:0000250" key="2">
    <source>
        <dbReference type="UniProtKB" id="P01730"/>
    </source>
</evidence>
<evidence type="ECO:0000255" key="3"/>
<evidence type="ECO:0000255" key="4">
    <source>
        <dbReference type="PROSITE-ProRule" id="PRU00114"/>
    </source>
</evidence>
<evidence type="ECO:0000256" key="5">
    <source>
        <dbReference type="SAM" id="MobiDB-lite"/>
    </source>
</evidence>
<feature type="signal peptide" evidence="3">
    <location>
        <begin position="1"/>
        <end position="25"/>
    </location>
</feature>
<feature type="chain" id="PRO_0000045165" description="T-cell surface glycoprotein CD4">
    <location>
        <begin position="26"/>
        <end position="455"/>
    </location>
</feature>
<feature type="topological domain" description="Extracellular" evidence="3">
    <location>
        <begin position="26"/>
        <end position="394"/>
    </location>
</feature>
<feature type="transmembrane region" description="Helical" evidence="3">
    <location>
        <begin position="395"/>
        <end position="415"/>
    </location>
</feature>
<feature type="topological domain" description="Cytoplasmic" evidence="3">
    <location>
        <begin position="416"/>
        <end position="455"/>
    </location>
</feature>
<feature type="domain" description="Ig-like V-type">
    <location>
        <begin position="26"/>
        <end position="125"/>
    </location>
</feature>
<feature type="domain" description="Ig-like C2-type 1">
    <location>
        <begin position="126"/>
        <end position="203"/>
    </location>
</feature>
<feature type="domain" description="Ig-like C2-type 2">
    <location>
        <begin position="204"/>
        <end position="314"/>
    </location>
</feature>
<feature type="domain" description="Ig-like C2-type 3">
    <location>
        <begin position="315"/>
        <end position="371"/>
    </location>
</feature>
<feature type="region of interest" description="Disordered" evidence="5">
    <location>
        <begin position="145"/>
        <end position="165"/>
    </location>
</feature>
<feature type="modified residue" description="Phosphoserine" evidence="2">
    <location>
        <position position="430"/>
    </location>
</feature>
<feature type="modified residue" description="Phosphoserine" evidence="2">
    <location>
        <position position="437"/>
    </location>
</feature>
<feature type="modified residue" description="Phosphoserine" evidence="2">
    <location>
        <position position="453"/>
    </location>
</feature>
<feature type="lipid moiety-binding region" description="S-palmitoyl cysteine" evidence="1">
    <location>
        <position position="419"/>
    </location>
</feature>
<feature type="glycosylation site" description="N-linked (GlcNAc...) asparagine" evidence="3">
    <location>
        <position position="46"/>
    </location>
</feature>
<feature type="glycosylation site" description="N-linked (GlcNAc...) asparagine" evidence="3">
    <location>
        <position position="220"/>
    </location>
</feature>
<feature type="glycosylation site" description="N-linked (GlcNAc...) asparagine" evidence="3">
    <location>
        <position position="231"/>
    </location>
</feature>
<feature type="glycosylation site" description="N-linked (GlcNAc...) asparagine" evidence="3">
    <location>
        <position position="295"/>
    </location>
</feature>
<feature type="glycosylation site" description="N-linked (GlcNAc...) asparagine" evidence="3">
    <location>
        <position position="299"/>
    </location>
</feature>
<feature type="glycosylation site" description="N-linked (GlcNAc...) asparagine" evidence="3">
    <location>
        <position position="343"/>
    </location>
</feature>
<feature type="disulfide bond" evidence="4">
    <location>
        <begin position="41"/>
        <end position="109"/>
    </location>
</feature>
<feature type="disulfide bond" evidence="4">
    <location>
        <begin position="325"/>
        <end position="367"/>
    </location>
</feature>
<proteinExistence type="evidence at transcript level"/>
<organism>
    <name type="scientific">Delphinapterus leucas</name>
    <name type="common">Beluga whale</name>
    <dbReference type="NCBI Taxonomy" id="9749"/>
    <lineage>
        <taxon>Eukaryota</taxon>
        <taxon>Metazoa</taxon>
        <taxon>Chordata</taxon>
        <taxon>Craniata</taxon>
        <taxon>Vertebrata</taxon>
        <taxon>Euteleostomi</taxon>
        <taxon>Mammalia</taxon>
        <taxon>Eutheria</taxon>
        <taxon>Laurasiatheria</taxon>
        <taxon>Artiodactyla</taxon>
        <taxon>Whippomorpha</taxon>
        <taxon>Cetacea</taxon>
        <taxon>Odontoceti</taxon>
        <taxon>Monodontidae</taxon>
        <taxon>Delphinapterus</taxon>
    </lineage>
</organism>
<name>CD4_DELLE</name>
<gene>
    <name type="primary">CD4</name>
</gene>
<reference key="1">
    <citation type="journal article" date="1999" name="Immunogenetics">
        <title>Molecular cloning and characterization of CD4 in an aquatic mammal, the white whale Delphinapterus leucas.</title>
        <authorList>
            <person name="Romano T.A."/>
            <person name="Ridgway S.H."/>
            <person name="Felten D.L."/>
            <person name="Quaranta V."/>
        </authorList>
    </citation>
    <scope>NUCLEOTIDE SEQUENCE [MRNA]</scope>
    <source>
        <tissue>Thymus</tissue>
    </source>
</reference>
<dbReference type="EMBL" id="AF071799">
    <property type="protein sequence ID" value="AAD23738.1"/>
    <property type="molecule type" value="mRNA"/>
</dbReference>
<dbReference type="RefSeq" id="XP_022433142.1">
    <property type="nucleotide sequence ID" value="XM_022577434.2"/>
</dbReference>
<dbReference type="SMR" id="Q9XS78"/>
<dbReference type="FunCoup" id="Q9XS78">
    <property type="interactions" value="300"/>
</dbReference>
<dbReference type="STRING" id="9749.Q9XS78"/>
<dbReference type="GlyCosmos" id="Q9XS78">
    <property type="glycosylation" value="6 sites, No reported glycans"/>
</dbReference>
<dbReference type="GeneID" id="111176687"/>
<dbReference type="InParanoid" id="Q9XS78"/>
<dbReference type="Proteomes" id="UP000248483">
    <property type="component" value="Unplaced"/>
</dbReference>
<dbReference type="GO" id="GO:0009986">
    <property type="term" value="C:cell surface"/>
    <property type="evidence" value="ECO:0007669"/>
    <property type="project" value="UniProtKB-ARBA"/>
</dbReference>
<dbReference type="GO" id="GO:0005886">
    <property type="term" value="C:plasma membrane"/>
    <property type="evidence" value="ECO:0007669"/>
    <property type="project" value="UniProtKB-SubCell"/>
</dbReference>
<dbReference type="GO" id="GO:0015026">
    <property type="term" value="F:coreceptor activity"/>
    <property type="evidence" value="ECO:0007669"/>
    <property type="project" value="InterPro"/>
</dbReference>
<dbReference type="GO" id="GO:0023026">
    <property type="term" value="F:MHC class II protein complex binding"/>
    <property type="evidence" value="ECO:0000250"/>
    <property type="project" value="UniProtKB"/>
</dbReference>
<dbReference type="GO" id="GO:0002250">
    <property type="term" value="P:adaptive immune response"/>
    <property type="evidence" value="ECO:0007669"/>
    <property type="project" value="UniProtKB-KW"/>
</dbReference>
<dbReference type="GO" id="GO:0007155">
    <property type="term" value="P:cell adhesion"/>
    <property type="evidence" value="ECO:0007669"/>
    <property type="project" value="InterPro"/>
</dbReference>
<dbReference type="CDD" id="cd22570">
    <property type="entry name" value="CD4_CD"/>
    <property type="match status" value="1"/>
</dbReference>
<dbReference type="CDD" id="cd07690">
    <property type="entry name" value="IgV_1_CD4"/>
    <property type="match status" value="1"/>
</dbReference>
<dbReference type="FunFam" id="2.60.40.10:FF:001105">
    <property type="entry name" value="T-cell surface glycoprotein CD4"/>
    <property type="match status" value="1"/>
</dbReference>
<dbReference type="FunFam" id="2.60.40.10:FF:001221">
    <property type="entry name" value="T-cell surface glycoprotein CD4"/>
    <property type="match status" value="1"/>
</dbReference>
<dbReference type="FunFam" id="2.60.40.10:FF:001253">
    <property type="entry name" value="T-cell surface glycoprotein CD4"/>
    <property type="match status" value="1"/>
</dbReference>
<dbReference type="Gene3D" id="2.60.40.10">
    <property type="entry name" value="Immunoglobulins"/>
    <property type="match status" value="4"/>
</dbReference>
<dbReference type="Gene3D" id="1.20.5.900">
    <property type="entry name" value="transmembrane domain of human cd4"/>
    <property type="match status" value="1"/>
</dbReference>
<dbReference type="InterPro" id="IPR000973">
    <property type="entry name" value="CD4"/>
</dbReference>
<dbReference type="InterPro" id="IPR015274">
    <property type="entry name" value="CD4-extracel"/>
</dbReference>
<dbReference type="InterPro" id="IPR007110">
    <property type="entry name" value="Ig-like_dom"/>
</dbReference>
<dbReference type="InterPro" id="IPR036179">
    <property type="entry name" value="Ig-like_dom_sf"/>
</dbReference>
<dbReference type="InterPro" id="IPR013783">
    <property type="entry name" value="Ig-like_fold"/>
</dbReference>
<dbReference type="InterPro" id="IPR008424">
    <property type="entry name" value="Ig_C2-set"/>
</dbReference>
<dbReference type="InterPro" id="IPR003599">
    <property type="entry name" value="Ig_sub"/>
</dbReference>
<dbReference type="InterPro" id="IPR013106">
    <property type="entry name" value="Ig_V-set"/>
</dbReference>
<dbReference type="InterPro" id="IPR013151">
    <property type="entry name" value="Immunoglobulin_dom"/>
</dbReference>
<dbReference type="InterPro" id="IPR021963">
    <property type="entry name" value="Tcell_CD4_Cterm"/>
</dbReference>
<dbReference type="PANTHER" id="PTHR11422">
    <property type="entry name" value="T-CELL SURFACE GLYCOPROTEIN CD4"/>
    <property type="match status" value="1"/>
</dbReference>
<dbReference type="PANTHER" id="PTHR11422:SF0">
    <property type="entry name" value="T-CELL SURFACE GLYCOPROTEIN CD4"/>
    <property type="match status" value="1"/>
</dbReference>
<dbReference type="Pfam" id="PF05790">
    <property type="entry name" value="C2-set"/>
    <property type="match status" value="2"/>
</dbReference>
<dbReference type="Pfam" id="PF09191">
    <property type="entry name" value="CD4-extracel"/>
    <property type="match status" value="1"/>
</dbReference>
<dbReference type="Pfam" id="PF00047">
    <property type="entry name" value="ig"/>
    <property type="match status" value="1"/>
</dbReference>
<dbReference type="Pfam" id="PF12104">
    <property type="entry name" value="Tcell_CD4_C"/>
    <property type="match status" value="1"/>
</dbReference>
<dbReference type="PRINTS" id="PR00692">
    <property type="entry name" value="CD4TCANTIGEN"/>
</dbReference>
<dbReference type="SMART" id="SM00409">
    <property type="entry name" value="IG"/>
    <property type="match status" value="3"/>
</dbReference>
<dbReference type="SMART" id="SM00406">
    <property type="entry name" value="IGv"/>
    <property type="match status" value="1"/>
</dbReference>
<dbReference type="SUPFAM" id="SSF48726">
    <property type="entry name" value="Immunoglobulin"/>
    <property type="match status" value="4"/>
</dbReference>
<dbReference type="PROSITE" id="PS50835">
    <property type="entry name" value="IG_LIKE"/>
    <property type="match status" value="2"/>
</dbReference>
<accession>Q9XS78</accession>